<feature type="chain" id="PRO_0000121671" description="tRNA-specific 2-thiouridylase MnmA">
    <location>
        <begin position="1"/>
        <end position="358"/>
    </location>
</feature>
<feature type="region of interest" description="Interaction with tRNA" evidence="1">
    <location>
        <begin position="147"/>
        <end position="149"/>
    </location>
</feature>
<feature type="active site" description="Nucleophile" evidence="1">
    <location>
        <position position="101"/>
    </location>
</feature>
<feature type="active site" description="Cysteine persulfide intermediate" evidence="1">
    <location>
        <position position="197"/>
    </location>
</feature>
<feature type="binding site" evidence="1">
    <location>
        <begin position="7"/>
        <end position="14"/>
    </location>
    <ligand>
        <name>ATP</name>
        <dbReference type="ChEBI" id="CHEBI:30616"/>
    </ligand>
</feature>
<feature type="binding site" evidence="1">
    <location>
        <position position="33"/>
    </location>
    <ligand>
        <name>ATP</name>
        <dbReference type="ChEBI" id="CHEBI:30616"/>
    </ligand>
</feature>
<feature type="binding site" evidence="1">
    <location>
        <position position="125"/>
    </location>
    <ligand>
        <name>ATP</name>
        <dbReference type="ChEBI" id="CHEBI:30616"/>
    </ligand>
</feature>
<feature type="site" description="Interaction with tRNA" evidence="1">
    <location>
        <position position="126"/>
    </location>
</feature>
<feature type="site" description="Interaction with tRNA" evidence="1">
    <location>
        <position position="337"/>
    </location>
</feature>
<feature type="disulfide bond" description="Alternate" evidence="1">
    <location>
        <begin position="101"/>
        <end position="197"/>
    </location>
</feature>
<comment type="function">
    <text evidence="1">Catalyzes the 2-thiolation of uridine at the wobble position (U34) of tRNA, leading to the formation of s(2)U34.</text>
</comment>
<comment type="catalytic activity">
    <reaction evidence="1">
        <text>S-sulfanyl-L-cysteinyl-[protein] + uridine(34) in tRNA + AH2 + ATP = 2-thiouridine(34) in tRNA + L-cysteinyl-[protein] + A + AMP + diphosphate + H(+)</text>
        <dbReference type="Rhea" id="RHEA:47032"/>
        <dbReference type="Rhea" id="RHEA-COMP:10131"/>
        <dbReference type="Rhea" id="RHEA-COMP:11726"/>
        <dbReference type="Rhea" id="RHEA-COMP:11727"/>
        <dbReference type="Rhea" id="RHEA-COMP:11728"/>
        <dbReference type="ChEBI" id="CHEBI:13193"/>
        <dbReference type="ChEBI" id="CHEBI:15378"/>
        <dbReference type="ChEBI" id="CHEBI:17499"/>
        <dbReference type="ChEBI" id="CHEBI:29950"/>
        <dbReference type="ChEBI" id="CHEBI:30616"/>
        <dbReference type="ChEBI" id="CHEBI:33019"/>
        <dbReference type="ChEBI" id="CHEBI:61963"/>
        <dbReference type="ChEBI" id="CHEBI:65315"/>
        <dbReference type="ChEBI" id="CHEBI:87170"/>
        <dbReference type="ChEBI" id="CHEBI:456215"/>
        <dbReference type="EC" id="2.8.1.13"/>
    </reaction>
</comment>
<comment type="subcellular location">
    <subcellularLocation>
        <location evidence="1">Cytoplasm</location>
    </subcellularLocation>
</comment>
<comment type="similarity">
    <text evidence="1">Belongs to the MnmA/TRMU family.</text>
</comment>
<evidence type="ECO:0000255" key="1">
    <source>
        <dbReference type="HAMAP-Rule" id="MF_00144"/>
    </source>
</evidence>
<proteinExistence type="inferred from homology"/>
<name>MNMA_RICTY</name>
<sequence length="358" mass="39536">MATIVVAMSGGVDSSAVAAMLHEQGHHVIGITLQLYDYGIAVGKKNACCAGKDIYDAKMVANKLGIPHYVLDYENKFKESVIDNFVNSYLHGETPLPCVQCNKLVKFRDLINTAKELGADKLATGHYVRKINGYNGAELHTGLDAAKDQSYFLFTITREQLEYLIFPLGGFTKYETRKLASKFGLDVADKPDSQDICFVPDGNYKTVINKIRPEASTSGKIVHINGFELGEHSGIINYTIGQRRGLGIAYNEPLYVVKIDPSNNIVYVGQESALHVHEFIIKDVNWLADEIKDNEKLAVDVKIRSTRPPCHAEISKLCNDKIKVQFLSAEKAVAPGQACVIYAGERVLGGGWITRNIR</sequence>
<reference key="1">
    <citation type="journal article" date="2004" name="J. Bacteriol.">
        <title>Complete genome sequence of Rickettsia typhi and comparison with sequences of other Rickettsiae.</title>
        <authorList>
            <person name="McLeod M.P."/>
            <person name="Qin X."/>
            <person name="Karpathy S.E."/>
            <person name="Gioia J."/>
            <person name="Highlander S.K."/>
            <person name="Fox G.E."/>
            <person name="McNeill T.Z."/>
            <person name="Jiang H."/>
            <person name="Muzny D."/>
            <person name="Jacob L.S."/>
            <person name="Hawes A.C."/>
            <person name="Sodergren E."/>
            <person name="Gill R."/>
            <person name="Hume J."/>
            <person name="Morgan M."/>
            <person name="Fan G."/>
            <person name="Amin A.G."/>
            <person name="Gibbs R.A."/>
            <person name="Hong C."/>
            <person name="Yu X.-J."/>
            <person name="Walker D.H."/>
            <person name="Weinstock G.M."/>
        </authorList>
    </citation>
    <scope>NUCLEOTIDE SEQUENCE [LARGE SCALE GENOMIC DNA]</scope>
    <source>
        <strain>ATCC VR-144 / Wilmington</strain>
    </source>
</reference>
<protein>
    <recommendedName>
        <fullName evidence="1">tRNA-specific 2-thiouridylase MnmA</fullName>
        <ecNumber evidence="1">2.8.1.13</ecNumber>
    </recommendedName>
</protein>
<keyword id="KW-0067">ATP-binding</keyword>
<keyword id="KW-0963">Cytoplasm</keyword>
<keyword id="KW-1015">Disulfide bond</keyword>
<keyword id="KW-0547">Nucleotide-binding</keyword>
<keyword id="KW-0694">RNA-binding</keyword>
<keyword id="KW-0808">Transferase</keyword>
<keyword id="KW-0819">tRNA processing</keyword>
<keyword id="KW-0820">tRNA-binding</keyword>
<gene>
    <name evidence="1" type="primary">mnmA</name>
    <name type="synonym">trmU</name>
    <name type="ordered locus">RT0296</name>
</gene>
<accession>Q68X66</accession>
<dbReference type="EC" id="2.8.1.13" evidence="1"/>
<dbReference type="EMBL" id="AE017197">
    <property type="protein sequence ID" value="AAU03776.1"/>
    <property type="molecule type" value="Genomic_DNA"/>
</dbReference>
<dbReference type="RefSeq" id="WP_011190760.1">
    <property type="nucleotide sequence ID" value="NC_006142.1"/>
</dbReference>
<dbReference type="SMR" id="Q68X66"/>
<dbReference type="KEGG" id="rty:RT0296"/>
<dbReference type="eggNOG" id="COG0482">
    <property type="taxonomic scope" value="Bacteria"/>
</dbReference>
<dbReference type="HOGENOM" id="CLU_035188_0_1_5"/>
<dbReference type="OrthoDB" id="9800696at2"/>
<dbReference type="Proteomes" id="UP000000604">
    <property type="component" value="Chromosome"/>
</dbReference>
<dbReference type="GO" id="GO:0005737">
    <property type="term" value="C:cytoplasm"/>
    <property type="evidence" value="ECO:0007669"/>
    <property type="project" value="UniProtKB-SubCell"/>
</dbReference>
<dbReference type="GO" id="GO:0005524">
    <property type="term" value="F:ATP binding"/>
    <property type="evidence" value="ECO:0007669"/>
    <property type="project" value="UniProtKB-KW"/>
</dbReference>
<dbReference type="GO" id="GO:0000049">
    <property type="term" value="F:tRNA binding"/>
    <property type="evidence" value="ECO:0007669"/>
    <property type="project" value="UniProtKB-KW"/>
</dbReference>
<dbReference type="GO" id="GO:0103016">
    <property type="term" value="F:tRNA-uridine 2-sulfurtransferase activity"/>
    <property type="evidence" value="ECO:0007669"/>
    <property type="project" value="UniProtKB-EC"/>
</dbReference>
<dbReference type="GO" id="GO:0002143">
    <property type="term" value="P:tRNA wobble position uridine thiolation"/>
    <property type="evidence" value="ECO:0007669"/>
    <property type="project" value="TreeGrafter"/>
</dbReference>
<dbReference type="CDD" id="cd01998">
    <property type="entry name" value="MnmA_TRMU-like"/>
    <property type="match status" value="1"/>
</dbReference>
<dbReference type="FunFam" id="2.30.30.280:FF:000001">
    <property type="entry name" value="tRNA-specific 2-thiouridylase MnmA"/>
    <property type="match status" value="1"/>
</dbReference>
<dbReference type="FunFam" id="2.40.30.10:FF:000127">
    <property type="entry name" value="tRNA-specific 2-thiouridylase MnmA"/>
    <property type="match status" value="1"/>
</dbReference>
<dbReference type="FunFam" id="3.40.50.620:FF:000115">
    <property type="entry name" value="tRNA-specific 2-thiouridylase MnmA"/>
    <property type="match status" value="1"/>
</dbReference>
<dbReference type="Gene3D" id="2.30.30.280">
    <property type="entry name" value="Adenine nucleotide alpha hydrolases-like domains"/>
    <property type="match status" value="1"/>
</dbReference>
<dbReference type="Gene3D" id="3.40.50.620">
    <property type="entry name" value="HUPs"/>
    <property type="match status" value="1"/>
</dbReference>
<dbReference type="Gene3D" id="2.40.30.10">
    <property type="entry name" value="Translation factors"/>
    <property type="match status" value="1"/>
</dbReference>
<dbReference type="HAMAP" id="MF_00144">
    <property type="entry name" value="tRNA_thiouridyl_MnmA"/>
    <property type="match status" value="1"/>
</dbReference>
<dbReference type="InterPro" id="IPR004506">
    <property type="entry name" value="MnmA-like"/>
</dbReference>
<dbReference type="InterPro" id="IPR046885">
    <property type="entry name" value="MnmA-like_C"/>
</dbReference>
<dbReference type="InterPro" id="IPR046884">
    <property type="entry name" value="MnmA-like_central"/>
</dbReference>
<dbReference type="InterPro" id="IPR023382">
    <property type="entry name" value="MnmA-like_central_sf"/>
</dbReference>
<dbReference type="InterPro" id="IPR014729">
    <property type="entry name" value="Rossmann-like_a/b/a_fold"/>
</dbReference>
<dbReference type="NCBIfam" id="NF001138">
    <property type="entry name" value="PRK00143.1"/>
    <property type="match status" value="1"/>
</dbReference>
<dbReference type="NCBIfam" id="TIGR00420">
    <property type="entry name" value="trmU"/>
    <property type="match status" value="1"/>
</dbReference>
<dbReference type="PANTHER" id="PTHR11933:SF5">
    <property type="entry name" value="MITOCHONDRIAL TRNA-SPECIFIC 2-THIOURIDYLASE 1"/>
    <property type="match status" value="1"/>
</dbReference>
<dbReference type="PANTHER" id="PTHR11933">
    <property type="entry name" value="TRNA 5-METHYLAMINOMETHYL-2-THIOURIDYLATE -METHYLTRANSFERASE"/>
    <property type="match status" value="1"/>
</dbReference>
<dbReference type="Pfam" id="PF03054">
    <property type="entry name" value="tRNA_Me_trans"/>
    <property type="match status" value="1"/>
</dbReference>
<dbReference type="Pfam" id="PF20258">
    <property type="entry name" value="tRNA_Me_trans_C"/>
    <property type="match status" value="1"/>
</dbReference>
<dbReference type="Pfam" id="PF20259">
    <property type="entry name" value="tRNA_Me_trans_M"/>
    <property type="match status" value="1"/>
</dbReference>
<dbReference type="SUPFAM" id="SSF52402">
    <property type="entry name" value="Adenine nucleotide alpha hydrolases-like"/>
    <property type="match status" value="1"/>
</dbReference>
<organism>
    <name type="scientific">Rickettsia typhi (strain ATCC VR-144 / Wilmington)</name>
    <dbReference type="NCBI Taxonomy" id="257363"/>
    <lineage>
        <taxon>Bacteria</taxon>
        <taxon>Pseudomonadati</taxon>
        <taxon>Pseudomonadota</taxon>
        <taxon>Alphaproteobacteria</taxon>
        <taxon>Rickettsiales</taxon>
        <taxon>Rickettsiaceae</taxon>
        <taxon>Rickettsieae</taxon>
        <taxon>Rickettsia</taxon>
        <taxon>typhus group</taxon>
    </lineage>
</organism>